<gene>
    <name type="primary">ymcE</name>
    <name type="ordered locus">Z1408</name>
    <name type="ordered locus">ECs1146</name>
</gene>
<comment type="subcellular location">
    <subcellularLocation>
        <location evidence="2">Cell membrane</location>
        <topology evidence="2">Single-pass membrane protein</topology>
    </subcellularLocation>
</comment>
<sequence length="76" mass="8683">MHRWISQNNIRLPCGAFFISVLFFFNAVCIVSDNLLIIESFGEMAYNISYLTRVPGTNTLLACCCLLRPEEVNSEY</sequence>
<organism>
    <name type="scientific">Escherichia coli O157:H7</name>
    <dbReference type="NCBI Taxonomy" id="83334"/>
    <lineage>
        <taxon>Bacteria</taxon>
        <taxon>Pseudomonadati</taxon>
        <taxon>Pseudomonadota</taxon>
        <taxon>Gammaproteobacteria</taxon>
        <taxon>Enterobacterales</taxon>
        <taxon>Enterobacteriaceae</taxon>
        <taxon>Escherichia</taxon>
    </lineage>
</organism>
<proteinExistence type="predicted"/>
<dbReference type="EMBL" id="AE005174">
    <property type="protein sequence ID" value="AAG55538.1"/>
    <property type="molecule type" value="Genomic_DNA"/>
</dbReference>
<dbReference type="EMBL" id="BA000007">
    <property type="protein sequence ID" value="BAB34569.1"/>
    <property type="molecule type" value="Genomic_DNA"/>
</dbReference>
<dbReference type="PIR" id="B90772">
    <property type="entry name" value="B90772"/>
</dbReference>
<dbReference type="PIR" id="F85634">
    <property type="entry name" value="F85634"/>
</dbReference>
<dbReference type="RefSeq" id="NP_309173.1">
    <property type="nucleotide sequence ID" value="NC_002695.1"/>
</dbReference>
<dbReference type="RefSeq" id="WP_001303885.1">
    <property type="nucleotide sequence ID" value="NZ_VOAI01000025.1"/>
</dbReference>
<dbReference type="STRING" id="155864.Z1408"/>
<dbReference type="GeneID" id="75171066"/>
<dbReference type="KEGG" id="ece:Z1408"/>
<dbReference type="PATRIC" id="fig|83334.175.peg.2828"/>
<dbReference type="HOGENOM" id="CLU_2478691_0_0_6"/>
<dbReference type="OMA" id="REMAYNI"/>
<dbReference type="Proteomes" id="UP000000558">
    <property type="component" value="Chromosome"/>
</dbReference>
<dbReference type="Proteomes" id="UP000002519">
    <property type="component" value="Chromosome"/>
</dbReference>
<dbReference type="GO" id="GO:0005886">
    <property type="term" value="C:plasma membrane"/>
    <property type="evidence" value="ECO:0007669"/>
    <property type="project" value="UniProtKB-SubCell"/>
</dbReference>
<dbReference type="InterPro" id="IPR031853">
    <property type="entry name" value="YmcE_antitoxin"/>
</dbReference>
<dbReference type="NCBIfam" id="NF007379">
    <property type="entry name" value="PRK09891.1"/>
    <property type="match status" value="1"/>
</dbReference>
<dbReference type="Pfam" id="PF15939">
    <property type="entry name" value="YmcE_antitoxin"/>
    <property type="match status" value="1"/>
</dbReference>
<evidence type="ECO:0000255" key="1"/>
<evidence type="ECO:0000305" key="2"/>
<protein>
    <recommendedName>
        <fullName>Uncharacterized protein YmcE</fullName>
    </recommendedName>
</protein>
<name>YMCE_ECO57</name>
<keyword id="KW-1003">Cell membrane</keyword>
<keyword id="KW-0472">Membrane</keyword>
<keyword id="KW-1185">Reference proteome</keyword>
<keyword id="KW-0812">Transmembrane</keyword>
<keyword id="KW-1133">Transmembrane helix</keyword>
<reference key="1">
    <citation type="journal article" date="2001" name="Nature">
        <title>Genome sequence of enterohaemorrhagic Escherichia coli O157:H7.</title>
        <authorList>
            <person name="Perna N.T."/>
            <person name="Plunkett G. III"/>
            <person name="Burland V."/>
            <person name="Mau B."/>
            <person name="Glasner J.D."/>
            <person name="Rose D.J."/>
            <person name="Mayhew G.F."/>
            <person name="Evans P.S."/>
            <person name="Gregor J."/>
            <person name="Kirkpatrick H.A."/>
            <person name="Posfai G."/>
            <person name="Hackett J."/>
            <person name="Klink S."/>
            <person name="Boutin A."/>
            <person name="Shao Y."/>
            <person name="Miller L."/>
            <person name="Grotbeck E.J."/>
            <person name="Davis N.W."/>
            <person name="Lim A."/>
            <person name="Dimalanta E.T."/>
            <person name="Potamousis K."/>
            <person name="Apodaca J."/>
            <person name="Anantharaman T.S."/>
            <person name="Lin J."/>
            <person name="Yen G."/>
            <person name="Schwartz D.C."/>
            <person name="Welch R.A."/>
            <person name="Blattner F.R."/>
        </authorList>
    </citation>
    <scope>NUCLEOTIDE SEQUENCE [LARGE SCALE GENOMIC DNA]</scope>
    <source>
        <strain>O157:H7 / EDL933 / ATCC 700927 / EHEC</strain>
    </source>
</reference>
<reference key="2">
    <citation type="journal article" date="2001" name="DNA Res.">
        <title>Complete genome sequence of enterohemorrhagic Escherichia coli O157:H7 and genomic comparison with a laboratory strain K-12.</title>
        <authorList>
            <person name="Hayashi T."/>
            <person name="Makino K."/>
            <person name="Ohnishi M."/>
            <person name="Kurokawa K."/>
            <person name="Ishii K."/>
            <person name="Yokoyama K."/>
            <person name="Han C.-G."/>
            <person name="Ohtsubo E."/>
            <person name="Nakayama K."/>
            <person name="Murata T."/>
            <person name="Tanaka M."/>
            <person name="Tobe T."/>
            <person name="Iida T."/>
            <person name="Takami H."/>
            <person name="Honda T."/>
            <person name="Sasakawa C."/>
            <person name="Ogasawara N."/>
            <person name="Yasunaga T."/>
            <person name="Kuhara S."/>
            <person name="Shiba T."/>
            <person name="Hattori M."/>
            <person name="Shinagawa H."/>
        </authorList>
    </citation>
    <scope>NUCLEOTIDE SEQUENCE [LARGE SCALE GENOMIC DNA]</scope>
    <source>
        <strain>O157:H7 / Sakai / RIMD 0509952 / EHEC</strain>
    </source>
</reference>
<accession>Q8XC17</accession>
<feature type="chain" id="PRO_0000097705" description="Uncharacterized protein YmcE">
    <location>
        <begin position="1"/>
        <end position="76"/>
    </location>
</feature>
<feature type="transmembrane region" description="Helical" evidence="1">
    <location>
        <begin position="12"/>
        <end position="32"/>
    </location>
</feature>